<comment type="function">
    <text evidence="1">Involved in the binding of tRNA to the ribosomes.</text>
</comment>
<comment type="subunit">
    <text evidence="1">Part of the 30S ribosomal subunit.</text>
</comment>
<comment type="similarity">
    <text evidence="1">Belongs to the universal ribosomal protein uS10 family.</text>
</comment>
<sequence>MAVQQKIRIKLKSYDHSLVDKWALRIIDVVKQTDAIIFGPIPLPTKSHVYTVNRSPHVDKKSREQFSFSSHKRLIEIINPTSRTIDMLMKLELPSGVDVEIKS</sequence>
<keyword id="KW-1185">Reference proteome</keyword>
<keyword id="KW-0687">Ribonucleoprotein</keyword>
<keyword id="KW-0689">Ribosomal protein</keyword>
<reference key="1">
    <citation type="submission" date="2008-06" db="EMBL/GenBank/DDBJ databases">
        <title>Complete sequence of Pelodictyon phaeoclathratiforme BU-1.</title>
        <authorList>
            <consortium name="US DOE Joint Genome Institute"/>
            <person name="Lucas S."/>
            <person name="Copeland A."/>
            <person name="Lapidus A."/>
            <person name="Glavina del Rio T."/>
            <person name="Dalin E."/>
            <person name="Tice H."/>
            <person name="Bruce D."/>
            <person name="Goodwin L."/>
            <person name="Pitluck S."/>
            <person name="Schmutz J."/>
            <person name="Larimer F."/>
            <person name="Land M."/>
            <person name="Hauser L."/>
            <person name="Kyrpides N."/>
            <person name="Mikhailova N."/>
            <person name="Liu Z."/>
            <person name="Li T."/>
            <person name="Zhao F."/>
            <person name="Overmann J."/>
            <person name="Bryant D.A."/>
            <person name="Richardson P."/>
        </authorList>
    </citation>
    <scope>NUCLEOTIDE SEQUENCE [LARGE SCALE GENOMIC DNA]</scope>
    <source>
        <strain>DSM 5477 / BU-1</strain>
    </source>
</reference>
<feature type="chain" id="PRO_1000127160" description="Small ribosomal subunit protein uS10">
    <location>
        <begin position="1"/>
        <end position="103"/>
    </location>
</feature>
<protein>
    <recommendedName>
        <fullName evidence="1">Small ribosomal subunit protein uS10</fullName>
    </recommendedName>
    <alternativeName>
        <fullName evidence="2">30S ribosomal protein S10</fullName>
    </alternativeName>
</protein>
<accession>B4SBU6</accession>
<dbReference type="EMBL" id="CP001110">
    <property type="protein sequence ID" value="ACF42621.1"/>
    <property type="molecule type" value="Genomic_DNA"/>
</dbReference>
<dbReference type="RefSeq" id="WP_012507117.1">
    <property type="nucleotide sequence ID" value="NC_011060.1"/>
</dbReference>
<dbReference type="SMR" id="B4SBU6"/>
<dbReference type="STRING" id="324925.Ppha_0288"/>
<dbReference type="KEGG" id="pph:Ppha_0288"/>
<dbReference type="eggNOG" id="COG0051">
    <property type="taxonomic scope" value="Bacteria"/>
</dbReference>
<dbReference type="HOGENOM" id="CLU_122625_1_3_10"/>
<dbReference type="OrthoDB" id="9804464at2"/>
<dbReference type="Proteomes" id="UP000002724">
    <property type="component" value="Chromosome"/>
</dbReference>
<dbReference type="GO" id="GO:1990904">
    <property type="term" value="C:ribonucleoprotein complex"/>
    <property type="evidence" value="ECO:0007669"/>
    <property type="project" value="UniProtKB-KW"/>
</dbReference>
<dbReference type="GO" id="GO:0005840">
    <property type="term" value="C:ribosome"/>
    <property type="evidence" value="ECO:0007669"/>
    <property type="project" value="UniProtKB-KW"/>
</dbReference>
<dbReference type="GO" id="GO:0003735">
    <property type="term" value="F:structural constituent of ribosome"/>
    <property type="evidence" value="ECO:0007669"/>
    <property type="project" value="InterPro"/>
</dbReference>
<dbReference type="GO" id="GO:0000049">
    <property type="term" value="F:tRNA binding"/>
    <property type="evidence" value="ECO:0007669"/>
    <property type="project" value="UniProtKB-UniRule"/>
</dbReference>
<dbReference type="GO" id="GO:0006412">
    <property type="term" value="P:translation"/>
    <property type="evidence" value="ECO:0007669"/>
    <property type="project" value="UniProtKB-UniRule"/>
</dbReference>
<dbReference type="FunFam" id="3.30.70.600:FF:000003">
    <property type="entry name" value="30S ribosomal protein S10"/>
    <property type="match status" value="1"/>
</dbReference>
<dbReference type="Gene3D" id="3.30.70.600">
    <property type="entry name" value="Ribosomal protein S10 domain"/>
    <property type="match status" value="1"/>
</dbReference>
<dbReference type="HAMAP" id="MF_00508">
    <property type="entry name" value="Ribosomal_uS10"/>
    <property type="match status" value="1"/>
</dbReference>
<dbReference type="InterPro" id="IPR001848">
    <property type="entry name" value="Ribosomal_uS10"/>
</dbReference>
<dbReference type="InterPro" id="IPR018268">
    <property type="entry name" value="Ribosomal_uS10_CS"/>
</dbReference>
<dbReference type="InterPro" id="IPR027486">
    <property type="entry name" value="Ribosomal_uS10_dom"/>
</dbReference>
<dbReference type="InterPro" id="IPR036838">
    <property type="entry name" value="Ribosomal_uS10_dom_sf"/>
</dbReference>
<dbReference type="NCBIfam" id="NF001861">
    <property type="entry name" value="PRK00596.1"/>
    <property type="match status" value="1"/>
</dbReference>
<dbReference type="NCBIfam" id="TIGR01049">
    <property type="entry name" value="rpsJ_bact"/>
    <property type="match status" value="1"/>
</dbReference>
<dbReference type="PANTHER" id="PTHR11700">
    <property type="entry name" value="30S RIBOSOMAL PROTEIN S10 FAMILY MEMBER"/>
    <property type="match status" value="1"/>
</dbReference>
<dbReference type="Pfam" id="PF00338">
    <property type="entry name" value="Ribosomal_S10"/>
    <property type="match status" value="1"/>
</dbReference>
<dbReference type="PRINTS" id="PR00971">
    <property type="entry name" value="RIBOSOMALS10"/>
</dbReference>
<dbReference type="SMART" id="SM01403">
    <property type="entry name" value="Ribosomal_S10"/>
    <property type="match status" value="1"/>
</dbReference>
<dbReference type="SUPFAM" id="SSF54999">
    <property type="entry name" value="Ribosomal protein S10"/>
    <property type="match status" value="1"/>
</dbReference>
<dbReference type="PROSITE" id="PS00361">
    <property type="entry name" value="RIBOSOMAL_S10"/>
    <property type="match status" value="1"/>
</dbReference>
<evidence type="ECO:0000255" key="1">
    <source>
        <dbReference type="HAMAP-Rule" id="MF_00508"/>
    </source>
</evidence>
<evidence type="ECO:0000305" key="2"/>
<proteinExistence type="inferred from homology"/>
<organism>
    <name type="scientific">Pelodictyon phaeoclathratiforme (strain DSM 5477 / BU-1)</name>
    <dbReference type="NCBI Taxonomy" id="324925"/>
    <lineage>
        <taxon>Bacteria</taxon>
        <taxon>Pseudomonadati</taxon>
        <taxon>Chlorobiota</taxon>
        <taxon>Chlorobiia</taxon>
        <taxon>Chlorobiales</taxon>
        <taxon>Chlorobiaceae</taxon>
        <taxon>Chlorobium/Pelodictyon group</taxon>
        <taxon>Pelodictyon</taxon>
    </lineage>
</organism>
<name>RS10_PELPB</name>
<gene>
    <name evidence="1" type="primary">rpsJ</name>
    <name type="ordered locus">Ppha_0288</name>
</gene>